<feature type="chain" id="PRO_0000349378" description="Hairy and enhancer of split-related protein HELT">
    <location>
        <begin position="1"/>
        <end position="242"/>
    </location>
</feature>
<feature type="domain" description="bHLH" evidence="4">
    <location>
        <begin position="10"/>
        <end position="65"/>
    </location>
</feature>
<feature type="domain" description="Orange" evidence="3">
    <location>
        <begin position="87"/>
        <end position="122"/>
    </location>
</feature>
<feature type="modified residue" description="N6-acetyllysine" evidence="2">
    <location>
        <position position="48"/>
    </location>
</feature>
<feature type="splice variant" id="VSP_056737" description="In isoform 2." evidence="5">
    <location>
        <position position="77"/>
    </location>
</feature>
<feature type="sequence variant" id="VAR_049540" description="In dbSNP:rs1078461.">
    <original>L</original>
    <variation>V</variation>
    <location>
        <position position="62"/>
    </location>
</feature>
<evidence type="ECO:0000250" key="1"/>
<evidence type="ECO:0000250" key="2">
    <source>
        <dbReference type="UniProtKB" id="Q7TS99"/>
    </source>
</evidence>
<evidence type="ECO:0000255" key="3">
    <source>
        <dbReference type="PROSITE-ProRule" id="PRU00380"/>
    </source>
</evidence>
<evidence type="ECO:0000255" key="4">
    <source>
        <dbReference type="PROSITE-ProRule" id="PRU00981"/>
    </source>
</evidence>
<evidence type="ECO:0000303" key="5">
    <source>
    </source>
</evidence>
<evidence type="ECO:0000305" key="6"/>
<comment type="function">
    <text evidence="1">Transcriptional repressor which binds preferentially to the canonical E box sequence 5'-CACGCG-3'.</text>
</comment>
<comment type="subunit">
    <text evidence="1">Self-associates. Interacts with HES5 and HEY2 (By similarity).</text>
</comment>
<comment type="subcellular location">
    <subcellularLocation>
        <location evidence="3 4">Nucleus</location>
    </subcellularLocation>
</comment>
<comment type="alternative products">
    <event type="alternative splicing"/>
    <isoform>
        <id>A6NFD8-3</id>
        <name>1</name>
        <sequence type="displayed"/>
    </isoform>
    <isoform>
        <id>A6NFD8-4</id>
        <name>2</name>
        <sequence type="described" ref="VSP_056737"/>
    </isoform>
</comment>
<comment type="similarity">
    <text evidence="6">Belongs to the HEY family.</text>
</comment>
<accession>A6NFD8</accession>
<accession>B2RTS5</accession>
<accession>B7ZMI7</accession>
<accession>B7ZMI8</accession>
<dbReference type="EMBL" id="AC093824">
    <property type="status" value="NOT_ANNOTATED_CDS"/>
    <property type="molecule type" value="Genomic_DNA"/>
</dbReference>
<dbReference type="EMBL" id="CH471056">
    <property type="protein sequence ID" value="EAX04657.1"/>
    <property type="molecule type" value="Genomic_DNA"/>
</dbReference>
<dbReference type="EMBL" id="BC140795">
    <property type="protein sequence ID" value="AAI40796.1"/>
    <property type="molecule type" value="mRNA"/>
</dbReference>
<dbReference type="EMBL" id="BC144567">
    <property type="protein sequence ID" value="AAI44568.1"/>
    <property type="molecule type" value="mRNA"/>
</dbReference>
<dbReference type="EMBL" id="BC144569">
    <property type="protein sequence ID" value="AAI44570.1"/>
    <property type="molecule type" value="mRNA"/>
</dbReference>
<dbReference type="CCDS" id="CCDS75214.1">
    <molecule id="A6NFD8-3"/>
</dbReference>
<dbReference type="CCDS" id="CCDS75215.1">
    <molecule id="A6NFD8-4"/>
</dbReference>
<dbReference type="RefSeq" id="NP_001287710.1">
    <molecule id="A6NFD8-3"/>
    <property type="nucleotide sequence ID" value="NM_001300781.2"/>
</dbReference>
<dbReference type="RefSeq" id="NP_001287711.1">
    <molecule id="A6NFD8-4"/>
    <property type="nucleotide sequence ID" value="NM_001300782.2"/>
</dbReference>
<dbReference type="SMR" id="A6NFD8"/>
<dbReference type="BioGRID" id="134034">
    <property type="interactions" value="14"/>
</dbReference>
<dbReference type="FunCoup" id="A6NFD8">
    <property type="interactions" value="657"/>
</dbReference>
<dbReference type="IntAct" id="A6NFD8">
    <property type="interactions" value="1"/>
</dbReference>
<dbReference type="STRING" id="9606.ENSP00000426033"/>
<dbReference type="PhosphoSitePlus" id="A6NFD8"/>
<dbReference type="BioMuta" id="HELT"/>
<dbReference type="PaxDb" id="9606-ENSP00000426033"/>
<dbReference type="Antibodypedia" id="28910">
    <property type="antibodies" value="98 antibodies from 18 providers"/>
</dbReference>
<dbReference type="DNASU" id="391723"/>
<dbReference type="Ensembl" id="ENST00000505610.5">
    <molecule id="A6NFD8-4"/>
    <property type="protein sequence ID" value="ENSP00000422140.1"/>
    <property type="gene ID" value="ENSG00000187821.9"/>
</dbReference>
<dbReference type="Ensembl" id="ENST00000515777.6">
    <molecule id="A6NFD8-3"/>
    <property type="protein sequence ID" value="ENSP00000426033.1"/>
    <property type="gene ID" value="ENSG00000187821.9"/>
</dbReference>
<dbReference type="GeneID" id="391723"/>
<dbReference type="KEGG" id="hsa:391723"/>
<dbReference type="MANE-Select" id="ENST00000515777.6">
    <property type="protein sequence ID" value="ENSP00000426033.1"/>
    <property type="RefSeq nucleotide sequence ID" value="NM_001300781.2"/>
    <property type="RefSeq protein sequence ID" value="NP_001287710.1"/>
</dbReference>
<dbReference type="UCSC" id="uc003ixa.3">
    <molecule id="A6NFD8-3"/>
    <property type="organism name" value="human"/>
</dbReference>
<dbReference type="AGR" id="HGNC:33783"/>
<dbReference type="CTD" id="391723"/>
<dbReference type="DisGeNET" id="391723"/>
<dbReference type="GeneCards" id="HELT"/>
<dbReference type="HGNC" id="HGNC:33783">
    <property type="gene designation" value="HELT"/>
</dbReference>
<dbReference type="HPA" id="ENSG00000187821">
    <property type="expression patterns" value="Tissue enhanced (kidney)"/>
</dbReference>
<dbReference type="MIM" id="617546">
    <property type="type" value="gene"/>
</dbReference>
<dbReference type="neXtProt" id="NX_A6NFD8"/>
<dbReference type="OpenTargets" id="ENSG00000187821"/>
<dbReference type="PharmGKB" id="PA162390819"/>
<dbReference type="VEuPathDB" id="HostDB:ENSG00000187821"/>
<dbReference type="eggNOG" id="KOG4304">
    <property type="taxonomic scope" value="Eukaryota"/>
</dbReference>
<dbReference type="GeneTree" id="ENSGT00940000160388"/>
<dbReference type="HOGENOM" id="CLU_084227_0_0_1"/>
<dbReference type="InParanoid" id="A6NFD8"/>
<dbReference type="OMA" id="GHTHANA"/>
<dbReference type="OrthoDB" id="6371181at2759"/>
<dbReference type="PAN-GO" id="A6NFD8">
    <property type="GO annotations" value="6 GO annotations based on evolutionary models"/>
</dbReference>
<dbReference type="TreeFam" id="TF323617"/>
<dbReference type="PathwayCommons" id="A6NFD8"/>
<dbReference type="BioGRID-ORCS" id="391723">
    <property type="hits" value="10 hits in 789 CRISPR screens"/>
</dbReference>
<dbReference type="GenomeRNAi" id="391723"/>
<dbReference type="Pharos" id="A6NFD8">
    <property type="development level" value="Tbio"/>
</dbReference>
<dbReference type="PRO" id="PR:A6NFD8"/>
<dbReference type="Proteomes" id="UP000005640">
    <property type="component" value="Chromosome 4"/>
</dbReference>
<dbReference type="RNAct" id="A6NFD8">
    <property type="molecule type" value="protein"/>
</dbReference>
<dbReference type="Bgee" id="ENSG00000187821">
    <property type="expression patterns" value="Expressed in skin of leg and 19 other cell types or tissues"/>
</dbReference>
<dbReference type="ExpressionAtlas" id="A6NFD8">
    <property type="expression patterns" value="baseline and differential"/>
</dbReference>
<dbReference type="GO" id="GO:0000785">
    <property type="term" value="C:chromatin"/>
    <property type="evidence" value="ECO:0000247"/>
    <property type="project" value="NTNU_SB"/>
</dbReference>
<dbReference type="GO" id="GO:0005634">
    <property type="term" value="C:nucleus"/>
    <property type="evidence" value="ECO:0000318"/>
    <property type="project" value="GO_Central"/>
</dbReference>
<dbReference type="GO" id="GO:0005667">
    <property type="term" value="C:transcription regulator complex"/>
    <property type="evidence" value="ECO:0007669"/>
    <property type="project" value="Ensembl"/>
</dbReference>
<dbReference type="GO" id="GO:0000981">
    <property type="term" value="F:DNA-binding transcription factor activity, RNA polymerase II-specific"/>
    <property type="evidence" value="ECO:0000247"/>
    <property type="project" value="NTNU_SB"/>
</dbReference>
<dbReference type="GO" id="GO:0001227">
    <property type="term" value="F:DNA-binding transcription repressor activity, RNA polymerase II-specific"/>
    <property type="evidence" value="ECO:0007669"/>
    <property type="project" value="Ensembl"/>
</dbReference>
<dbReference type="GO" id="GO:0042802">
    <property type="term" value="F:identical protein binding"/>
    <property type="evidence" value="ECO:0007669"/>
    <property type="project" value="Ensembl"/>
</dbReference>
<dbReference type="GO" id="GO:0046983">
    <property type="term" value="F:protein dimerization activity"/>
    <property type="evidence" value="ECO:0007669"/>
    <property type="project" value="InterPro"/>
</dbReference>
<dbReference type="GO" id="GO:0000978">
    <property type="term" value="F:RNA polymerase II cis-regulatory region sequence-specific DNA binding"/>
    <property type="evidence" value="ECO:0000318"/>
    <property type="project" value="GO_Central"/>
</dbReference>
<dbReference type="GO" id="GO:0007417">
    <property type="term" value="P:central nervous system development"/>
    <property type="evidence" value="ECO:0007669"/>
    <property type="project" value="Ensembl"/>
</dbReference>
<dbReference type="GO" id="GO:0021858">
    <property type="term" value="P:GABAergic neuron differentiation in basal ganglia"/>
    <property type="evidence" value="ECO:0007669"/>
    <property type="project" value="Ensembl"/>
</dbReference>
<dbReference type="GO" id="GO:0035264">
    <property type="term" value="P:multicellular organism growth"/>
    <property type="evidence" value="ECO:0007669"/>
    <property type="project" value="Ensembl"/>
</dbReference>
<dbReference type="GO" id="GO:0045944">
    <property type="term" value="P:positive regulation of transcription by RNA polymerase II"/>
    <property type="evidence" value="ECO:0007669"/>
    <property type="project" value="Ensembl"/>
</dbReference>
<dbReference type="GO" id="GO:0009791">
    <property type="term" value="P:post-embryonic development"/>
    <property type="evidence" value="ECO:0007669"/>
    <property type="project" value="Ensembl"/>
</dbReference>
<dbReference type="GO" id="GO:0050767">
    <property type="term" value="P:regulation of neurogenesis"/>
    <property type="evidence" value="ECO:0000318"/>
    <property type="project" value="GO_Central"/>
</dbReference>
<dbReference type="GO" id="GO:0001967">
    <property type="term" value="P:suckling behavior"/>
    <property type="evidence" value="ECO:0007669"/>
    <property type="project" value="Ensembl"/>
</dbReference>
<dbReference type="GO" id="GO:0006366">
    <property type="term" value="P:transcription by RNA polymerase II"/>
    <property type="evidence" value="ECO:0007669"/>
    <property type="project" value="Ensembl"/>
</dbReference>
<dbReference type="CDD" id="cd11408">
    <property type="entry name" value="bHLH-O_HELT"/>
    <property type="match status" value="1"/>
</dbReference>
<dbReference type="FunFam" id="4.10.280.10:FF:000054">
    <property type="entry name" value="hairy and enhancer of split-related protein HELT"/>
    <property type="match status" value="1"/>
</dbReference>
<dbReference type="Gene3D" id="6.10.250.980">
    <property type="match status" value="1"/>
</dbReference>
<dbReference type="Gene3D" id="4.10.280.10">
    <property type="entry name" value="Helix-loop-helix DNA-binding domain"/>
    <property type="match status" value="1"/>
</dbReference>
<dbReference type="InterPro" id="IPR011598">
    <property type="entry name" value="bHLH_dom"/>
</dbReference>
<dbReference type="InterPro" id="IPR050370">
    <property type="entry name" value="HES_HEY"/>
</dbReference>
<dbReference type="InterPro" id="IPR036638">
    <property type="entry name" value="HLH_DNA-bd_sf"/>
</dbReference>
<dbReference type="InterPro" id="IPR003650">
    <property type="entry name" value="Orange_dom"/>
</dbReference>
<dbReference type="PANTHER" id="PTHR10985">
    <property type="entry name" value="BASIC HELIX-LOOP-HELIX TRANSCRIPTION FACTOR, HES-RELATED"/>
    <property type="match status" value="1"/>
</dbReference>
<dbReference type="Pfam" id="PF07527">
    <property type="entry name" value="Hairy_orange"/>
    <property type="match status" value="1"/>
</dbReference>
<dbReference type="Pfam" id="PF00010">
    <property type="entry name" value="HLH"/>
    <property type="match status" value="1"/>
</dbReference>
<dbReference type="SMART" id="SM00353">
    <property type="entry name" value="HLH"/>
    <property type="match status" value="1"/>
</dbReference>
<dbReference type="SUPFAM" id="SSF47459">
    <property type="entry name" value="HLH, helix-loop-helix DNA-binding domain"/>
    <property type="match status" value="1"/>
</dbReference>
<dbReference type="SUPFAM" id="SSF158457">
    <property type="entry name" value="Orange domain-like"/>
    <property type="match status" value="1"/>
</dbReference>
<dbReference type="PROSITE" id="PS50888">
    <property type="entry name" value="BHLH"/>
    <property type="match status" value="1"/>
</dbReference>
<dbReference type="PROSITE" id="PS51054">
    <property type="entry name" value="ORANGE"/>
    <property type="match status" value="1"/>
</dbReference>
<protein>
    <recommendedName>
        <fullName>Hairy and enhancer of split-related protein HELT</fullName>
    </recommendedName>
    <alternativeName>
        <fullName>HES/HEY-like transcription factor</fullName>
    </alternativeName>
</protein>
<organism>
    <name type="scientific">Homo sapiens</name>
    <name type="common">Human</name>
    <dbReference type="NCBI Taxonomy" id="9606"/>
    <lineage>
        <taxon>Eukaryota</taxon>
        <taxon>Metazoa</taxon>
        <taxon>Chordata</taxon>
        <taxon>Craniata</taxon>
        <taxon>Vertebrata</taxon>
        <taxon>Euteleostomi</taxon>
        <taxon>Mammalia</taxon>
        <taxon>Eutheria</taxon>
        <taxon>Euarchontoglires</taxon>
        <taxon>Primates</taxon>
        <taxon>Haplorrhini</taxon>
        <taxon>Catarrhini</taxon>
        <taxon>Hominidae</taxon>
        <taxon>Homo</taxon>
    </lineage>
</organism>
<proteinExistence type="evidence at transcript level"/>
<keyword id="KW-0007">Acetylation</keyword>
<keyword id="KW-0025">Alternative splicing</keyword>
<keyword id="KW-0238">DNA-binding</keyword>
<keyword id="KW-0539">Nucleus</keyword>
<keyword id="KW-1185">Reference proteome</keyword>
<keyword id="KW-0678">Repressor</keyword>
<keyword id="KW-0804">Transcription</keyword>
<keyword id="KW-0805">Transcription regulation</keyword>
<sequence length="242" mass="26913">MSDKLKERKRTPVSHKVIEKRRRDRINRCLNELGKTVPMALAKQSSGKLEKAEILEMTVQYLRALHSADFPRGREKAELLAEFANYFHYGYHECMKNLVHYLTTVERMETKDTKYARILAFLQSKARLGAEPAFPPLGSLPEPDFSYQLHPAGPEFAGHSPGEAAVFPQGSGAGPFPWPPGAARSPALPYLPSAPVPLASPAQQHSPFLTPVQGLDRHYLNLIGHAHPNALNLHTPQHPPVL</sequence>
<gene>
    <name type="primary">HELT</name>
</gene>
<reference key="1">
    <citation type="journal article" date="2005" name="Nature">
        <title>Generation and annotation of the DNA sequences of human chromosomes 2 and 4.</title>
        <authorList>
            <person name="Hillier L.W."/>
            <person name="Graves T.A."/>
            <person name="Fulton R.S."/>
            <person name="Fulton L.A."/>
            <person name="Pepin K.H."/>
            <person name="Minx P."/>
            <person name="Wagner-McPherson C."/>
            <person name="Layman D."/>
            <person name="Wylie K."/>
            <person name="Sekhon M."/>
            <person name="Becker M.C."/>
            <person name="Fewell G.A."/>
            <person name="Delehaunty K.D."/>
            <person name="Miner T.L."/>
            <person name="Nash W.E."/>
            <person name="Kremitzki C."/>
            <person name="Oddy L."/>
            <person name="Du H."/>
            <person name="Sun H."/>
            <person name="Bradshaw-Cordum H."/>
            <person name="Ali J."/>
            <person name="Carter J."/>
            <person name="Cordes M."/>
            <person name="Harris A."/>
            <person name="Isak A."/>
            <person name="van Brunt A."/>
            <person name="Nguyen C."/>
            <person name="Du F."/>
            <person name="Courtney L."/>
            <person name="Kalicki J."/>
            <person name="Ozersky P."/>
            <person name="Abbott S."/>
            <person name="Armstrong J."/>
            <person name="Belter E.A."/>
            <person name="Caruso L."/>
            <person name="Cedroni M."/>
            <person name="Cotton M."/>
            <person name="Davidson T."/>
            <person name="Desai A."/>
            <person name="Elliott G."/>
            <person name="Erb T."/>
            <person name="Fronick C."/>
            <person name="Gaige T."/>
            <person name="Haakenson W."/>
            <person name="Haglund K."/>
            <person name="Holmes A."/>
            <person name="Harkins R."/>
            <person name="Kim K."/>
            <person name="Kruchowski S.S."/>
            <person name="Strong C.M."/>
            <person name="Grewal N."/>
            <person name="Goyea E."/>
            <person name="Hou S."/>
            <person name="Levy A."/>
            <person name="Martinka S."/>
            <person name="Mead K."/>
            <person name="McLellan M.D."/>
            <person name="Meyer R."/>
            <person name="Randall-Maher J."/>
            <person name="Tomlinson C."/>
            <person name="Dauphin-Kohlberg S."/>
            <person name="Kozlowicz-Reilly A."/>
            <person name="Shah N."/>
            <person name="Swearengen-Shahid S."/>
            <person name="Snider J."/>
            <person name="Strong J.T."/>
            <person name="Thompson J."/>
            <person name="Yoakum M."/>
            <person name="Leonard S."/>
            <person name="Pearman C."/>
            <person name="Trani L."/>
            <person name="Radionenko M."/>
            <person name="Waligorski J.E."/>
            <person name="Wang C."/>
            <person name="Rock S.M."/>
            <person name="Tin-Wollam A.-M."/>
            <person name="Maupin R."/>
            <person name="Latreille P."/>
            <person name="Wendl M.C."/>
            <person name="Yang S.-P."/>
            <person name="Pohl C."/>
            <person name="Wallis J.W."/>
            <person name="Spieth J."/>
            <person name="Bieri T.A."/>
            <person name="Berkowicz N."/>
            <person name="Nelson J.O."/>
            <person name="Osborne J."/>
            <person name="Ding L."/>
            <person name="Meyer R."/>
            <person name="Sabo A."/>
            <person name="Shotland Y."/>
            <person name="Sinha P."/>
            <person name="Wohldmann P.E."/>
            <person name="Cook L.L."/>
            <person name="Hickenbotham M.T."/>
            <person name="Eldred J."/>
            <person name="Williams D."/>
            <person name="Jones T.A."/>
            <person name="She X."/>
            <person name="Ciccarelli F.D."/>
            <person name="Izaurralde E."/>
            <person name="Taylor J."/>
            <person name="Schmutz J."/>
            <person name="Myers R.M."/>
            <person name="Cox D.R."/>
            <person name="Huang X."/>
            <person name="McPherson J.D."/>
            <person name="Mardis E.R."/>
            <person name="Clifton S.W."/>
            <person name="Warren W.C."/>
            <person name="Chinwalla A.T."/>
            <person name="Eddy S.R."/>
            <person name="Marra M.A."/>
            <person name="Ovcharenko I."/>
            <person name="Furey T.S."/>
            <person name="Miller W."/>
            <person name="Eichler E.E."/>
            <person name="Bork P."/>
            <person name="Suyama M."/>
            <person name="Torrents D."/>
            <person name="Waterston R.H."/>
            <person name="Wilson R.K."/>
        </authorList>
    </citation>
    <scope>NUCLEOTIDE SEQUENCE [LARGE SCALE GENOMIC DNA]</scope>
</reference>
<reference key="2">
    <citation type="submission" date="2005-09" db="EMBL/GenBank/DDBJ databases">
        <authorList>
            <person name="Mural R.J."/>
            <person name="Istrail S."/>
            <person name="Sutton G.G."/>
            <person name="Florea L."/>
            <person name="Halpern A.L."/>
            <person name="Mobarry C.M."/>
            <person name="Lippert R."/>
            <person name="Walenz B."/>
            <person name="Shatkay H."/>
            <person name="Dew I."/>
            <person name="Miller J.R."/>
            <person name="Flanigan M.J."/>
            <person name="Edwards N.J."/>
            <person name="Bolanos R."/>
            <person name="Fasulo D."/>
            <person name="Halldorsson B.V."/>
            <person name="Hannenhalli S."/>
            <person name="Turner R."/>
            <person name="Yooseph S."/>
            <person name="Lu F."/>
            <person name="Nusskern D.R."/>
            <person name="Shue B.C."/>
            <person name="Zheng X.H."/>
            <person name="Zhong F."/>
            <person name="Delcher A.L."/>
            <person name="Huson D.H."/>
            <person name="Kravitz S.A."/>
            <person name="Mouchard L."/>
            <person name="Reinert K."/>
            <person name="Remington K.A."/>
            <person name="Clark A.G."/>
            <person name="Waterman M.S."/>
            <person name="Eichler E.E."/>
            <person name="Adams M.D."/>
            <person name="Hunkapiller M.W."/>
            <person name="Myers E.W."/>
            <person name="Venter J.C."/>
        </authorList>
    </citation>
    <scope>NUCLEOTIDE SEQUENCE [LARGE SCALE GENOMIC DNA]</scope>
</reference>
<reference key="3">
    <citation type="journal article" date="2004" name="Genome Res.">
        <title>The status, quality, and expansion of the NIH full-length cDNA project: the Mammalian Gene Collection (MGC).</title>
        <authorList>
            <consortium name="The MGC Project Team"/>
        </authorList>
    </citation>
    <scope>NUCLEOTIDE SEQUENCE [LARGE SCALE MRNA] (ISOFORMS 1 AND 2)</scope>
</reference>
<name>HELT_HUMAN</name>